<protein>
    <recommendedName>
        <fullName>RNA-binding protein 42</fullName>
    </recommendedName>
    <alternativeName>
        <fullName>RNA-binding motif protein 42</fullName>
    </alternativeName>
</protein>
<reference key="1">
    <citation type="submission" date="2006-08" db="EMBL/GenBank/DDBJ databases">
        <authorList>
            <consortium name="NIH - Mammalian Gene Collection (MGC) project"/>
        </authorList>
    </citation>
    <scope>NUCLEOTIDE SEQUENCE [LARGE SCALE MRNA]</scope>
    <source>
        <strain>Hereford</strain>
        <tissue>Brain cortex</tissue>
    </source>
</reference>
<feature type="initiator methionine" description="Removed" evidence="2">
    <location>
        <position position="1"/>
    </location>
</feature>
<feature type="chain" id="PRO_0000307749" description="RNA-binding protein 42">
    <location>
        <begin position="2"/>
        <end position="448"/>
    </location>
</feature>
<feature type="domain" description="RRM" evidence="3">
    <location>
        <begin position="349"/>
        <end position="427"/>
    </location>
</feature>
<feature type="region of interest" description="Disordered" evidence="4">
    <location>
        <begin position="1"/>
        <end position="29"/>
    </location>
</feature>
<feature type="region of interest" description="Necessary for interaction with HNRNPK" evidence="1">
    <location>
        <begin position="204"/>
        <end position="448"/>
    </location>
</feature>
<feature type="region of interest" description="Disordered" evidence="4">
    <location>
        <begin position="286"/>
        <end position="324"/>
    </location>
</feature>
<feature type="compositionally biased region" description="Gly residues" evidence="4">
    <location>
        <begin position="11"/>
        <end position="27"/>
    </location>
</feature>
<feature type="compositionally biased region" description="Basic and acidic residues" evidence="4">
    <location>
        <begin position="313"/>
        <end position="324"/>
    </location>
</feature>
<feature type="modified residue" description="N-acetylalanine" evidence="2">
    <location>
        <position position="2"/>
    </location>
</feature>
<feature type="modified residue" description="Phosphoserine" evidence="2">
    <location>
        <position position="132"/>
    </location>
</feature>
<feature type="modified residue" description="Asymmetric dimethylarginine" evidence="2">
    <location>
        <position position="149"/>
    </location>
</feature>
<dbReference type="EMBL" id="BC119904">
    <property type="protein sequence ID" value="AAI19905.1"/>
    <property type="molecule type" value="mRNA"/>
</dbReference>
<dbReference type="RefSeq" id="NP_001069673.1">
    <property type="nucleotide sequence ID" value="NM_001076205.1"/>
</dbReference>
<dbReference type="SMR" id="Q0P5L0"/>
<dbReference type="FunCoup" id="Q0P5L0">
    <property type="interactions" value="20"/>
</dbReference>
<dbReference type="STRING" id="9913.ENSBTAP00000063810"/>
<dbReference type="PaxDb" id="9913-ENSBTAP00000017884"/>
<dbReference type="GeneID" id="540172"/>
<dbReference type="KEGG" id="bta:540172"/>
<dbReference type="CTD" id="79171"/>
<dbReference type="eggNOG" id="KOG0226">
    <property type="taxonomic scope" value="Eukaryota"/>
</dbReference>
<dbReference type="InParanoid" id="Q0P5L0"/>
<dbReference type="OrthoDB" id="1749473at2759"/>
<dbReference type="Proteomes" id="UP000009136">
    <property type="component" value="Unplaced"/>
</dbReference>
<dbReference type="GO" id="GO:0005737">
    <property type="term" value="C:cytoplasm"/>
    <property type="evidence" value="ECO:0007669"/>
    <property type="project" value="UniProtKB-SubCell"/>
</dbReference>
<dbReference type="GO" id="GO:0005634">
    <property type="term" value="C:nucleus"/>
    <property type="evidence" value="ECO:0007669"/>
    <property type="project" value="UniProtKB-SubCell"/>
</dbReference>
<dbReference type="GO" id="GO:0003729">
    <property type="term" value="F:mRNA binding"/>
    <property type="evidence" value="ECO:0000318"/>
    <property type="project" value="GO_Central"/>
</dbReference>
<dbReference type="CDD" id="cd12383">
    <property type="entry name" value="RRM_RBM42"/>
    <property type="match status" value="1"/>
</dbReference>
<dbReference type="FunFam" id="3.30.70.330:FF:000189">
    <property type="entry name" value="RNA-binding protein 42 isoform X2"/>
    <property type="match status" value="1"/>
</dbReference>
<dbReference type="Gene3D" id="3.30.70.330">
    <property type="match status" value="1"/>
</dbReference>
<dbReference type="InterPro" id="IPR012677">
    <property type="entry name" value="Nucleotide-bd_a/b_plait_sf"/>
</dbReference>
<dbReference type="InterPro" id="IPR035979">
    <property type="entry name" value="RBD_domain_sf"/>
</dbReference>
<dbReference type="InterPro" id="IPR050825">
    <property type="entry name" value="RBM42_RBP45_47-like"/>
</dbReference>
<dbReference type="InterPro" id="IPR034215">
    <property type="entry name" value="RBM42_RRM"/>
</dbReference>
<dbReference type="InterPro" id="IPR000504">
    <property type="entry name" value="RRM_dom"/>
</dbReference>
<dbReference type="PANTHER" id="PTHR47640:SF11">
    <property type="entry name" value="RNA-BINDING PROTEIN 42"/>
    <property type="match status" value="1"/>
</dbReference>
<dbReference type="PANTHER" id="PTHR47640">
    <property type="entry name" value="TRNA SELENOCYSTEINE 1-ASSOCIATED PROTEIN 1-RELATED-RELATED"/>
    <property type="match status" value="1"/>
</dbReference>
<dbReference type="Pfam" id="PF00076">
    <property type="entry name" value="RRM_1"/>
    <property type="match status" value="1"/>
</dbReference>
<dbReference type="SMART" id="SM00360">
    <property type="entry name" value="RRM"/>
    <property type="match status" value="1"/>
</dbReference>
<dbReference type="SUPFAM" id="SSF54928">
    <property type="entry name" value="RNA-binding domain, RBD"/>
    <property type="match status" value="1"/>
</dbReference>
<dbReference type="PROSITE" id="PS50102">
    <property type="entry name" value="RRM"/>
    <property type="match status" value="1"/>
</dbReference>
<keyword id="KW-0007">Acetylation</keyword>
<keyword id="KW-0963">Cytoplasm</keyword>
<keyword id="KW-0488">Methylation</keyword>
<keyword id="KW-0539">Nucleus</keyword>
<keyword id="KW-0597">Phosphoprotein</keyword>
<keyword id="KW-1185">Reference proteome</keyword>
<keyword id="KW-0694">RNA-binding</keyword>
<evidence type="ECO:0000250" key="1"/>
<evidence type="ECO:0000250" key="2">
    <source>
        <dbReference type="UniProtKB" id="Q9BTD8"/>
    </source>
</evidence>
<evidence type="ECO:0000255" key="3">
    <source>
        <dbReference type="PROSITE-ProRule" id="PRU00176"/>
    </source>
</evidence>
<evidence type="ECO:0000256" key="4">
    <source>
        <dbReference type="SAM" id="MobiDB-lite"/>
    </source>
</evidence>
<evidence type="ECO:0000305" key="5"/>
<organism>
    <name type="scientific">Bos taurus</name>
    <name type="common">Bovine</name>
    <dbReference type="NCBI Taxonomy" id="9913"/>
    <lineage>
        <taxon>Eukaryota</taxon>
        <taxon>Metazoa</taxon>
        <taxon>Chordata</taxon>
        <taxon>Craniata</taxon>
        <taxon>Vertebrata</taxon>
        <taxon>Euteleostomi</taxon>
        <taxon>Mammalia</taxon>
        <taxon>Eutheria</taxon>
        <taxon>Laurasiatheria</taxon>
        <taxon>Artiodactyla</taxon>
        <taxon>Ruminantia</taxon>
        <taxon>Pecora</taxon>
        <taxon>Bovidae</taxon>
        <taxon>Bovinae</taxon>
        <taxon>Bos</taxon>
    </lineage>
</organism>
<accession>Q0P5L0</accession>
<comment type="function">
    <text evidence="1">Binds (via the RRM domain) to the 3'-untranslated region (UTR) of CDKN1A mRNA.</text>
</comment>
<comment type="subunit">
    <text evidence="1">Interacts with HNRNPK.</text>
</comment>
<comment type="subcellular location">
    <subcellularLocation>
        <location evidence="1">Nucleus</location>
    </subcellularLocation>
    <subcellularLocation>
        <location evidence="1">Cytoplasm</location>
    </subcellularLocation>
    <text evidence="1">Upon stress response, localizes with HNRNPK in cytoplasmic aggregates of stalled translational preinitiation complexes called stress granules.</text>
</comment>
<comment type="similarity">
    <text evidence="5">Belongs to the RRM RBM42 family.</text>
</comment>
<gene>
    <name type="primary">RBM42</name>
</gene>
<name>RBM42_BOVIN</name>
<proteinExistence type="evidence at transcript level"/>
<sequence>MAGAGPAPGLPGAGGPVVPGPGAGIPGKSGEERLKEMEAEMALFEQEVLGAPVTGIPTAVPAVPTVPTVEAMQVPAAPVIRPIIATNTYQQVQQTLEARAAAAATVVPPMVGGPPFVGPVGFGPGDRSHLDSPEAREAMFLRRAAAGPRPMALRPPHQALVGPPLPGPPGPPMMLPPMARAPGPPLGSMAALRPPLEEPATPRELGLGLGLGLKEKEEAVVAAAAGLEEASAVVAVGAGGAPAGPAVIGPSLPLALAMPLPEPEPLPLPLEVVRGLLPPLRIPELLSLRPRPRPPRPEPPPGLMALEVPEPLSEDKKKGKPEKLKRCIRTAAGSSWEDPSLLEWDADDFRIFCGDLGNEVNDDILARAFSRFPSFLKAKVIRDKRTGKTKGYGFVSFKDPSDYVRAMREMNGKYVGSRPIKLRKSMWKDRNLDVVRKKQKEKKKLGLR</sequence>